<evidence type="ECO:0000255" key="1">
    <source>
        <dbReference type="HAMAP-Rule" id="MF_01383"/>
    </source>
</evidence>
<name>PSBD1_SYNP6</name>
<reference key="1">
    <citation type="journal article" date="2007" name="Photosyn. Res.">
        <title>Complete nucleotide sequence of the freshwater unicellular cyanobacterium Synechococcus elongatus PCC 6301 chromosome: gene content and organization.</title>
        <authorList>
            <person name="Sugita C."/>
            <person name="Ogata K."/>
            <person name="Shikata M."/>
            <person name="Jikuya H."/>
            <person name="Takano J."/>
            <person name="Furumichi M."/>
            <person name="Kanehisa M."/>
            <person name="Omata T."/>
            <person name="Sugiura M."/>
            <person name="Sugita M."/>
        </authorList>
    </citation>
    <scope>NUCLEOTIDE SEQUENCE [LARGE SCALE GENOMIC DNA]</scope>
    <source>
        <strain>ATCC 27144 / PCC 6301 / SAUG 1402/1</strain>
    </source>
</reference>
<gene>
    <name evidence="1" type="primary">psbD1</name>
    <name type="ordered locus">syc0873_c</name>
</gene>
<proteinExistence type="inferred from homology"/>
<feature type="chain" id="PRO_0000359604" description="Photosystem II D2 protein 1">
    <location>
        <begin position="1"/>
        <end position="352"/>
    </location>
</feature>
<feature type="transmembrane region" description="Helical" evidence="1">
    <location>
        <begin position="40"/>
        <end position="60"/>
    </location>
</feature>
<feature type="transmembrane region" description="Helical" evidence="1">
    <location>
        <begin position="124"/>
        <end position="140"/>
    </location>
</feature>
<feature type="transmembrane region" description="Helical" evidence="1">
    <location>
        <begin position="152"/>
        <end position="165"/>
    </location>
</feature>
<feature type="transmembrane region" description="Helical" evidence="1">
    <location>
        <begin position="207"/>
        <end position="227"/>
    </location>
</feature>
<feature type="transmembrane region" description="Helical" evidence="1">
    <location>
        <begin position="278"/>
        <end position="294"/>
    </location>
</feature>
<feature type="binding site" description="axial binding residue" evidence="1">
    <location>
        <position position="117"/>
    </location>
    <ligand>
        <name>chlorophyll a</name>
        <dbReference type="ChEBI" id="CHEBI:58416"/>
        <label>ChlzD2</label>
    </ligand>
    <ligandPart>
        <name>Mg</name>
        <dbReference type="ChEBI" id="CHEBI:25107"/>
    </ligandPart>
</feature>
<feature type="binding site" evidence="1">
    <location>
        <position position="129"/>
    </location>
    <ligand>
        <name>pheophytin a</name>
        <dbReference type="ChEBI" id="CHEBI:136840"/>
        <label>D2</label>
    </ligand>
</feature>
<feature type="binding site" evidence="1">
    <location>
        <position position="142"/>
    </location>
    <ligand>
        <name>pheophytin a</name>
        <dbReference type="ChEBI" id="CHEBI:136840"/>
        <label>D2</label>
    </ligand>
</feature>
<feature type="binding site" description="axial binding residue" evidence="1">
    <location>
        <position position="197"/>
    </location>
    <ligand>
        <name>chlorophyll a</name>
        <dbReference type="ChEBI" id="CHEBI:58416"/>
        <label>PD2</label>
    </ligand>
    <ligandPart>
        <name>Mg</name>
        <dbReference type="ChEBI" id="CHEBI:25107"/>
    </ligandPart>
</feature>
<feature type="binding site" evidence="1">
    <location>
        <position position="214"/>
    </location>
    <ligand>
        <name>a plastoquinone</name>
        <dbReference type="ChEBI" id="CHEBI:17757"/>
        <label>Q(A)</label>
    </ligand>
</feature>
<feature type="binding site" evidence="1">
    <location>
        <position position="214"/>
    </location>
    <ligand>
        <name>Fe cation</name>
        <dbReference type="ChEBI" id="CHEBI:24875"/>
        <note>ligand shared with heterodimeric partner</note>
    </ligand>
</feature>
<feature type="binding site" evidence="1">
    <location>
        <position position="261"/>
    </location>
    <ligand>
        <name>a plastoquinone</name>
        <dbReference type="ChEBI" id="CHEBI:17757"/>
        <label>Q(A)</label>
    </ligand>
</feature>
<feature type="binding site" evidence="1">
    <location>
        <position position="268"/>
    </location>
    <ligand>
        <name>Fe cation</name>
        <dbReference type="ChEBI" id="CHEBI:24875"/>
        <note>ligand shared with heterodimeric partner</note>
    </ligand>
</feature>
<accession>Q5N3Q7</accession>
<dbReference type="EC" id="1.10.3.9" evidence="1"/>
<dbReference type="EMBL" id="AP008231">
    <property type="protein sequence ID" value="BAD79063.1"/>
    <property type="molecule type" value="Genomic_DNA"/>
</dbReference>
<dbReference type="SMR" id="Q5N3Q7"/>
<dbReference type="KEGG" id="syc:syc0873_c"/>
<dbReference type="eggNOG" id="ENOG502Z8JK">
    <property type="taxonomic scope" value="Bacteria"/>
</dbReference>
<dbReference type="Proteomes" id="UP000001175">
    <property type="component" value="Chromosome"/>
</dbReference>
<dbReference type="GO" id="GO:0009523">
    <property type="term" value="C:photosystem II"/>
    <property type="evidence" value="ECO:0007669"/>
    <property type="project" value="UniProtKB-KW"/>
</dbReference>
<dbReference type="GO" id="GO:0031676">
    <property type="term" value="C:plasma membrane-derived thylakoid membrane"/>
    <property type="evidence" value="ECO:0007669"/>
    <property type="project" value="UniProtKB-SubCell"/>
</dbReference>
<dbReference type="GO" id="GO:0016168">
    <property type="term" value="F:chlorophyll binding"/>
    <property type="evidence" value="ECO:0007669"/>
    <property type="project" value="UniProtKB-UniRule"/>
</dbReference>
<dbReference type="GO" id="GO:0045156">
    <property type="term" value="F:electron transporter, transferring electrons within the cyclic electron transport pathway of photosynthesis activity"/>
    <property type="evidence" value="ECO:0007669"/>
    <property type="project" value="InterPro"/>
</dbReference>
<dbReference type="GO" id="GO:0005506">
    <property type="term" value="F:iron ion binding"/>
    <property type="evidence" value="ECO:0007669"/>
    <property type="project" value="UniProtKB-UniRule"/>
</dbReference>
<dbReference type="GO" id="GO:0010242">
    <property type="term" value="F:oxygen evolving activity"/>
    <property type="evidence" value="ECO:0007669"/>
    <property type="project" value="UniProtKB-EC"/>
</dbReference>
<dbReference type="GO" id="GO:0009772">
    <property type="term" value="P:photosynthetic electron transport in photosystem II"/>
    <property type="evidence" value="ECO:0007669"/>
    <property type="project" value="InterPro"/>
</dbReference>
<dbReference type="FunFam" id="1.20.85.10:FF:000001">
    <property type="entry name" value="photosystem II D2 protein-like"/>
    <property type="match status" value="1"/>
</dbReference>
<dbReference type="Gene3D" id="1.20.85.10">
    <property type="entry name" value="Photosystem II protein D1-like"/>
    <property type="match status" value="1"/>
</dbReference>
<dbReference type="HAMAP" id="MF_01383">
    <property type="entry name" value="PSII_PsbD_D2"/>
    <property type="match status" value="1"/>
</dbReference>
<dbReference type="InterPro" id="IPR055266">
    <property type="entry name" value="D1/D2"/>
</dbReference>
<dbReference type="InterPro" id="IPR036854">
    <property type="entry name" value="Photo_II_D1/D2_sf"/>
</dbReference>
<dbReference type="InterPro" id="IPR000484">
    <property type="entry name" value="Photo_RC_L/M"/>
</dbReference>
<dbReference type="InterPro" id="IPR055265">
    <property type="entry name" value="Photo_RC_L/M_CS"/>
</dbReference>
<dbReference type="InterPro" id="IPR005868">
    <property type="entry name" value="PSII_PsbD/D2"/>
</dbReference>
<dbReference type="NCBIfam" id="TIGR01152">
    <property type="entry name" value="psbD"/>
    <property type="match status" value="1"/>
</dbReference>
<dbReference type="PANTHER" id="PTHR33149:SF12">
    <property type="entry name" value="PHOTOSYSTEM II D2 PROTEIN"/>
    <property type="match status" value="1"/>
</dbReference>
<dbReference type="PANTHER" id="PTHR33149">
    <property type="entry name" value="PHOTOSYSTEM II PROTEIN D1"/>
    <property type="match status" value="1"/>
</dbReference>
<dbReference type="Pfam" id="PF00124">
    <property type="entry name" value="Photo_RC"/>
    <property type="match status" value="1"/>
</dbReference>
<dbReference type="PRINTS" id="PR00256">
    <property type="entry name" value="REACTNCENTRE"/>
</dbReference>
<dbReference type="SUPFAM" id="SSF81483">
    <property type="entry name" value="Bacterial photosystem II reaction centre, L and M subunits"/>
    <property type="match status" value="1"/>
</dbReference>
<dbReference type="PROSITE" id="PS00244">
    <property type="entry name" value="REACTION_CENTER"/>
    <property type="match status" value="1"/>
</dbReference>
<organism>
    <name type="scientific">Synechococcus sp. (strain ATCC 27144 / PCC 6301 / SAUG 1402/1)</name>
    <name type="common">Anacystis nidulans</name>
    <dbReference type="NCBI Taxonomy" id="269084"/>
    <lineage>
        <taxon>Bacteria</taxon>
        <taxon>Bacillati</taxon>
        <taxon>Cyanobacteriota</taxon>
        <taxon>Cyanophyceae</taxon>
        <taxon>Synechococcales</taxon>
        <taxon>Synechococcaceae</taxon>
        <taxon>Synechococcus</taxon>
    </lineage>
</organism>
<comment type="function">
    <text evidence="1">Photosystem II (PSII) is a light-driven water:plastoquinone oxidoreductase that uses light energy to abstract electrons from H(2)O, generating O(2) and a proton gradient subsequently used for ATP formation. It consists of a core antenna complex that captures photons, and an electron transfer chain that converts photonic excitation into a charge separation. The D1/D2 (PsbA/PsbD) reaction center heterodimer binds P680, the primary electron donor of PSII as well as several subsequent electron acceptors. D2 is needed for assembly of a stable PSII complex.</text>
</comment>
<comment type="catalytic activity">
    <reaction evidence="1">
        <text>2 a plastoquinone + 4 hnu + 2 H2O = 2 a plastoquinol + O2</text>
        <dbReference type="Rhea" id="RHEA:36359"/>
        <dbReference type="Rhea" id="RHEA-COMP:9561"/>
        <dbReference type="Rhea" id="RHEA-COMP:9562"/>
        <dbReference type="ChEBI" id="CHEBI:15377"/>
        <dbReference type="ChEBI" id="CHEBI:15379"/>
        <dbReference type="ChEBI" id="CHEBI:17757"/>
        <dbReference type="ChEBI" id="CHEBI:30212"/>
        <dbReference type="ChEBI" id="CHEBI:62192"/>
        <dbReference type="EC" id="1.10.3.9"/>
    </reaction>
</comment>
<comment type="cofactor">
    <text evidence="1">The D1/D2 heterodimer binds P680, chlorophylls that are the primary electron donor of PSII, and subsequent electron acceptors. It shares a non-heme iron and each subunit binds pheophytin, quinone, additional chlorophylls, carotenoids and lipids. There is also a Cl(-1) ion associated with D1 and D2, which is required for oxygen evolution. The PSII complex binds additional chlorophylls, carotenoids and specific lipids.</text>
</comment>
<comment type="subunit">
    <text evidence="1">PSII is composed of 1 copy each of membrane proteins PsbA, PsbB, PsbC, PsbD, PsbE, PsbF, PsbH, PsbI, PsbJ, PsbK, PsbL, PsbM, PsbT, PsbX, PsbY, PsbZ, Psb30/Ycf12, peripheral proteins PsbO, CyanoQ (PsbQ), PsbU, PsbV and a large number of cofactors. It forms dimeric complexes.</text>
</comment>
<comment type="subcellular location">
    <subcellularLocation>
        <location evidence="1">Cellular thylakoid membrane</location>
        <topology evidence="1">Multi-pass membrane protein</topology>
    </subcellularLocation>
</comment>
<comment type="miscellaneous">
    <text evidence="1">2 of the reaction center chlorophylls (ChlD1 and ChlD2) are entirely coordinated by water.</text>
</comment>
<comment type="similarity">
    <text evidence="1">Belongs to the reaction center PufL/M/PsbA/D family.</text>
</comment>
<keyword id="KW-0148">Chlorophyll</keyword>
<keyword id="KW-0157">Chromophore</keyword>
<keyword id="KW-0249">Electron transport</keyword>
<keyword id="KW-0408">Iron</keyword>
<keyword id="KW-0460">Magnesium</keyword>
<keyword id="KW-0472">Membrane</keyword>
<keyword id="KW-0479">Metal-binding</keyword>
<keyword id="KW-0560">Oxidoreductase</keyword>
<keyword id="KW-0602">Photosynthesis</keyword>
<keyword id="KW-0604">Photosystem II</keyword>
<keyword id="KW-0793">Thylakoid</keyword>
<keyword id="KW-0812">Transmembrane</keyword>
<keyword id="KW-1133">Transmembrane helix</keyword>
<keyword id="KW-0813">Transport</keyword>
<sequence>MTIAVGRAPAERGWFDVLDDWLKRDRFVFVGWSGLLLFPCAYLALGGWLTGTSFVTSWYTHGIASSYLEGGNFLTVAVSTPADAFGHSLMLLWGPEAQGNFVRWCQLGGLWNFVALHGAFGLIGFMLRQFEIARLVGVRPYNAIAFSGPIAVFVSVFLMYPLGQSSWFFAPSFGVAAIFRFLLFLQGFHNWTLNPFHMMGVAGILGGALLCAIHGATVENTLFEDSEQSNTFRAFEPTQAEETYSMVTANRFWSQIFGIAFSNKRWLHFFMLFVPVTGLWMSSIGIVGLALNLRAYDFVSQELRAAEDPEFETFYTKNILLNEGIRAWMAPQDQPHEKFVFPEEVLPRGNAL</sequence>
<protein>
    <recommendedName>
        <fullName evidence="1">Photosystem II D2 protein 1</fullName>
        <shortName evidence="1">PSII D2 protein 1</shortName>
        <ecNumber evidence="1">1.10.3.9</ecNumber>
    </recommendedName>
    <alternativeName>
        <fullName evidence="1">Photosystem Q(A) protein 1</fullName>
    </alternativeName>
</protein>